<gene>
    <name evidence="2" type="primary">KRT19</name>
</gene>
<feature type="chain" id="PRO_0000227526" description="Keratin, type I cytoskeletal 19" evidence="7">
    <location>
        <begin position="1"/>
        <end position="400"/>
    </location>
</feature>
<feature type="domain" description="IF rod" evidence="6">
    <location>
        <begin position="80"/>
        <end position="391"/>
    </location>
</feature>
<feature type="region of interest" description="Head" evidence="5">
    <location>
        <begin position="1"/>
        <end position="79"/>
    </location>
</feature>
<feature type="region of interest" description="Coil 1A" evidence="5">
    <location>
        <begin position="80"/>
        <end position="115"/>
    </location>
</feature>
<feature type="region of interest" description="Linker 1" evidence="5">
    <location>
        <begin position="116"/>
        <end position="133"/>
    </location>
</feature>
<feature type="region of interest" description="Coil 1B" evidence="5">
    <location>
        <begin position="134"/>
        <end position="225"/>
    </location>
</feature>
<feature type="region of interest" description="Linker 12" evidence="5">
    <location>
        <begin position="226"/>
        <end position="248"/>
    </location>
</feature>
<feature type="region of interest" description="Necessary for interaction with PNN" evidence="2">
    <location>
        <begin position="244"/>
        <end position="390"/>
    </location>
</feature>
<feature type="region of interest" description="Coil 2" evidence="5">
    <location>
        <begin position="249"/>
        <end position="387"/>
    </location>
</feature>
<feature type="region of interest" description="Rod-like helical tail" evidence="5">
    <location>
        <begin position="388"/>
        <end position="400"/>
    </location>
</feature>
<feature type="site" description="Stutter" evidence="5">
    <location>
        <position position="267"/>
    </location>
</feature>
<feature type="site" description="Stutter" evidence="5">
    <location>
        <position position="327"/>
    </location>
</feature>
<feature type="modified residue" description="Omega-N-methylarginine" evidence="2">
    <location>
        <position position="7"/>
    </location>
</feature>
<feature type="modified residue" description="Phosphoserine" evidence="2">
    <location>
        <position position="14"/>
    </location>
</feature>
<feature type="modified residue" description="Phosphoserine" evidence="2">
    <location>
        <position position="22"/>
    </location>
</feature>
<feature type="modified residue" description="Asymmetric dimethylarginine; alternate" evidence="2">
    <location>
        <position position="24"/>
    </location>
</feature>
<feature type="modified residue" description="Omega-N-methylarginine; alternate" evidence="2">
    <location>
        <position position="24"/>
    </location>
</feature>
<feature type="modified residue" description="Omega-N-methylarginine" evidence="2">
    <location>
        <position position="32"/>
    </location>
</feature>
<feature type="modified residue" description="Phosphoserine" evidence="2">
    <location>
        <position position="35"/>
    </location>
</feature>
<feature type="modified residue" description="Phosphoserine" evidence="4">
    <location>
        <position position="40"/>
    </location>
</feature>
<feature type="modified residue" description="Omega-N-methylarginine" evidence="2">
    <location>
        <position position="43"/>
    </location>
</feature>
<feature type="modified residue" description="Omega-N-methylarginine" evidence="2">
    <location>
        <position position="51"/>
    </location>
</feature>
<feature type="modified residue" description="Phosphoserine" evidence="4">
    <location>
        <position position="57"/>
    </location>
</feature>
<feature type="modified residue" description="Phosphoserine" evidence="3">
    <location>
        <position position="72"/>
    </location>
</feature>
<feature type="modified residue" description="Phosphothreonine" evidence="2">
    <location>
        <position position="323"/>
    </location>
</feature>
<feature type="modified residue" description="Phosphotyrosine" evidence="2">
    <location>
        <position position="391"/>
    </location>
</feature>
<feature type="modified residue" description="Phosphoserine" evidence="2">
    <location>
        <position position="395"/>
    </location>
</feature>
<evidence type="ECO:0000250" key="1"/>
<evidence type="ECO:0000250" key="2">
    <source>
        <dbReference type="UniProtKB" id="P08727"/>
    </source>
</evidence>
<evidence type="ECO:0000250" key="3">
    <source>
        <dbReference type="UniProtKB" id="P19001"/>
    </source>
</evidence>
<evidence type="ECO:0000250" key="4">
    <source>
        <dbReference type="UniProtKB" id="Q63279"/>
    </source>
</evidence>
<evidence type="ECO:0000255" key="5"/>
<evidence type="ECO:0000255" key="6">
    <source>
        <dbReference type="PROSITE-ProRule" id="PRU01188"/>
    </source>
</evidence>
<evidence type="ECO:0000305" key="7"/>
<evidence type="ECO:0000312" key="8">
    <source>
        <dbReference type="EMBL" id="CAH91831.1"/>
    </source>
</evidence>
<name>K1C19_PONAB</name>
<reference evidence="8" key="1">
    <citation type="submission" date="2004-11" db="EMBL/GenBank/DDBJ databases">
        <authorList>
            <consortium name="The German cDNA consortium"/>
        </authorList>
    </citation>
    <scope>NUCLEOTIDE SEQUENCE [LARGE SCALE MRNA]</scope>
    <source>
        <tissue evidence="8">Kidney</tissue>
    </source>
</reference>
<dbReference type="EMBL" id="CR859670">
    <property type="protein sequence ID" value="CAH91831.1"/>
    <property type="molecule type" value="mRNA"/>
</dbReference>
<dbReference type="RefSeq" id="NP_001126058.1">
    <property type="nucleotide sequence ID" value="NM_001132586.2"/>
</dbReference>
<dbReference type="SMR" id="Q5R8S9"/>
<dbReference type="FunCoup" id="Q5R8S9">
    <property type="interactions" value="285"/>
</dbReference>
<dbReference type="STRING" id="9601.ENSPPYP00000009462"/>
<dbReference type="GeneID" id="100173010"/>
<dbReference type="KEGG" id="pon:100173010"/>
<dbReference type="CTD" id="3880"/>
<dbReference type="eggNOG" id="ENOG502QV0B">
    <property type="taxonomic scope" value="Eukaryota"/>
</dbReference>
<dbReference type="InParanoid" id="Q5R8S9"/>
<dbReference type="OrthoDB" id="2441647at2759"/>
<dbReference type="Proteomes" id="UP000001595">
    <property type="component" value="Unplaced"/>
</dbReference>
<dbReference type="GO" id="GO:0005882">
    <property type="term" value="C:intermediate filament"/>
    <property type="evidence" value="ECO:0007669"/>
    <property type="project" value="UniProtKB-KW"/>
</dbReference>
<dbReference type="GO" id="GO:0005198">
    <property type="term" value="F:structural molecule activity"/>
    <property type="evidence" value="ECO:0007669"/>
    <property type="project" value="InterPro"/>
</dbReference>
<dbReference type="GO" id="GO:0030855">
    <property type="term" value="P:epithelial cell differentiation"/>
    <property type="evidence" value="ECO:0007669"/>
    <property type="project" value="TreeGrafter"/>
</dbReference>
<dbReference type="GO" id="GO:0045109">
    <property type="term" value="P:intermediate filament organization"/>
    <property type="evidence" value="ECO:0007669"/>
    <property type="project" value="TreeGrafter"/>
</dbReference>
<dbReference type="FunFam" id="1.20.5.1160:FF:000002">
    <property type="entry name" value="Type I keratin 10"/>
    <property type="match status" value="1"/>
</dbReference>
<dbReference type="FunFam" id="1.20.5.170:FF:000002">
    <property type="entry name" value="Type I keratin KA11"/>
    <property type="match status" value="1"/>
</dbReference>
<dbReference type="FunFam" id="1.20.5.500:FF:000001">
    <property type="entry name" value="Type II keratin 23"/>
    <property type="match status" value="1"/>
</dbReference>
<dbReference type="Gene3D" id="1.20.5.170">
    <property type="match status" value="1"/>
</dbReference>
<dbReference type="Gene3D" id="1.20.5.500">
    <property type="entry name" value="Single helix bin"/>
    <property type="match status" value="1"/>
</dbReference>
<dbReference type="Gene3D" id="1.20.5.1160">
    <property type="entry name" value="Vasodilator-stimulated phosphoprotein"/>
    <property type="match status" value="1"/>
</dbReference>
<dbReference type="InterPro" id="IPR018039">
    <property type="entry name" value="IF_conserved"/>
</dbReference>
<dbReference type="InterPro" id="IPR039008">
    <property type="entry name" value="IF_rod_dom"/>
</dbReference>
<dbReference type="InterPro" id="IPR002957">
    <property type="entry name" value="Keratin_I"/>
</dbReference>
<dbReference type="PANTHER" id="PTHR23239">
    <property type="entry name" value="INTERMEDIATE FILAMENT"/>
    <property type="match status" value="1"/>
</dbReference>
<dbReference type="PANTHER" id="PTHR23239:SF14">
    <property type="entry name" value="KERATIN, TYPE I CYTOSKELETAL 19"/>
    <property type="match status" value="1"/>
</dbReference>
<dbReference type="Pfam" id="PF00038">
    <property type="entry name" value="Filament"/>
    <property type="match status" value="1"/>
</dbReference>
<dbReference type="PRINTS" id="PR01248">
    <property type="entry name" value="TYPE1KERATIN"/>
</dbReference>
<dbReference type="SMART" id="SM01391">
    <property type="entry name" value="Filament"/>
    <property type="match status" value="1"/>
</dbReference>
<dbReference type="SUPFAM" id="SSF64593">
    <property type="entry name" value="Intermediate filament protein, coiled coil region"/>
    <property type="match status" value="2"/>
</dbReference>
<dbReference type="SUPFAM" id="SSF46579">
    <property type="entry name" value="Prefoldin"/>
    <property type="match status" value="1"/>
</dbReference>
<dbReference type="PROSITE" id="PS00226">
    <property type="entry name" value="IF_ROD_1"/>
    <property type="match status" value="1"/>
</dbReference>
<dbReference type="PROSITE" id="PS51842">
    <property type="entry name" value="IF_ROD_2"/>
    <property type="match status" value="1"/>
</dbReference>
<accession>Q5R8S9</accession>
<sequence>MTSYSYRQSSAMSSFGGLGGGSVRFGPGVAFRAPSIHGGSGGRGVSVSSARFVSSSSSGGYGGGYGGVLTASDGLLAGNEKLTMQNLNDRLASYLDKVRALEAANGELEVKIRDWYQKQGPGPSRDYSHYYTTIQDLRDKILGATIENSRIVLQIDNARLAADDFRTKFETEQALRMSVEADINGLRRVLDELTLARADLEMQIEGLKEELAYLKKNHEEEISTLRGQVGGQVSVEVDSAPGTDLAKILSDMRSQYEVMAEQNRKDAEAWFTSRTEELNREVAGHTEQLQMSRSEVTDLRRTLQGLEIELQSQLSMKAALEDTLAETEARFGAQLAHIQALISGIEAQLGDVRADSERQNQEYQRLMDIKSRLEQEIATYRSLLEGQEDHYSNLSASKVL</sequence>
<keyword id="KW-0175">Coiled coil</keyword>
<keyword id="KW-0403">Intermediate filament</keyword>
<keyword id="KW-0416">Keratin</keyword>
<keyword id="KW-0488">Methylation</keyword>
<keyword id="KW-0597">Phosphoprotein</keyword>
<keyword id="KW-1185">Reference proteome</keyword>
<organism>
    <name type="scientific">Pongo abelii</name>
    <name type="common">Sumatran orangutan</name>
    <name type="synonym">Pongo pygmaeus abelii</name>
    <dbReference type="NCBI Taxonomy" id="9601"/>
    <lineage>
        <taxon>Eukaryota</taxon>
        <taxon>Metazoa</taxon>
        <taxon>Chordata</taxon>
        <taxon>Craniata</taxon>
        <taxon>Vertebrata</taxon>
        <taxon>Euteleostomi</taxon>
        <taxon>Mammalia</taxon>
        <taxon>Eutheria</taxon>
        <taxon>Euarchontoglires</taxon>
        <taxon>Primates</taxon>
        <taxon>Haplorrhini</taxon>
        <taxon>Catarrhini</taxon>
        <taxon>Hominidae</taxon>
        <taxon>Pongo</taxon>
    </lineage>
</organism>
<proteinExistence type="evidence at transcript level"/>
<protein>
    <recommendedName>
        <fullName>Keratin, type I cytoskeletal 19</fullName>
    </recommendedName>
    <alternativeName>
        <fullName>Cytokeratin-19</fullName>
        <shortName>CK-19</shortName>
    </alternativeName>
    <alternativeName>
        <fullName>Keratin-19</fullName>
        <shortName>K19</shortName>
    </alternativeName>
</protein>
<comment type="function">
    <text evidence="1">Involved in the organization of myofibers. Together with KRT8, helps to link the contractile apparatus to dystrophin at the costameres of striated muscle (By similarity).</text>
</comment>
<comment type="subunit">
    <text evidence="2 7">Heterotetramer of two type I and two type II keratins. Interacts with PNN and the actin-binding domain of DMD (By similarity).</text>
</comment>
<comment type="domain">
    <text evidence="7">This keratin differs from all other IF proteins in lacking the C-terminal tail domain.</text>
</comment>
<comment type="miscellaneous">
    <text>There are two types of cytoskeletal and microfibrillar keratin: I (acidic; 40-55 kDa) and II (neutral to basic; 56-70 kDa).</text>
</comment>
<comment type="similarity">
    <text evidence="6">Belongs to the intermediate filament family.</text>
</comment>